<comment type="function">
    <text evidence="2">Represses transcription of the icaADBC operon necessary for biofilm production.</text>
</comment>
<comment type="subunit">
    <text evidence="3">Homodimer.</text>
</comment>
<comment type="induction">
    <text evidence="2">Repressed by ethanol.</text>
</comment>
<comment type="disruption phenotype">
    <text evidence="2">Cells lacking this gene display a 5.8-fold increase in ica operon expression.</text>
</comment>
<comment type="miscellaneous">
    <text>Binding to the ica operator DNA involves two IcaR dimers and is highly cooperative. Two aminoglycoside antibiotics, namely, gentamicin and streptomycin, show an inhibitory effect on the IcaR-DNA interactions. Consequently, by interfering with the binding of IcaR to DNA, aminoglycoside gentamicin and other antibiotics may activate the icaADBC genes and elicit biofilm production in S.epidermidis, as a defense mechanism. The four antibiotics kanamycin, tetracycline, ampicillin and chloramphenicol do not show significant effect on the IcaR-DNA binding.</text>
</comment>
<keyword id="KW-0002">3D-structure</keyword>
<keyword id="KW-0238">DNA-binding</keyword>
<keyword id="KW-1185">Reference proteome</keyword>
<keyword id="KW-0678">Repressor</keyword>
<keyword id="KW-0804">Transcription</keyword>
<keyword id="KW-0805">Transcription regulation</keyword>
<dbReference type="EMBL" id="U43366">
    <property type="protein sequence ID" value="AAC06121.1"/>
    <property type="molecule type" value="Genomic_DNA"/>
</dbReference>
<dbReference type="EMBL" id="CP000029">
    <property type="protein sequence ID" value="AAW53174.1"/>
    <property type="molecule type" value="Genomic_DNA"/>
</dbReference>
<dbReference type="RefSeq" id="WP_002497698.1">
    <property type="nucleotide sequence ID" value="NC_002976.3"/>
</dbReference>
<dbReference type="PDB" id="2ZCM">
    <property type="method" value="X-ray"/>
    <property type="resolution" value="1.33 A"/>
    <property type="chains" value="A/B=1-185"/>
</dbReference>
<dbReference type="PDB" id="2ZCN">
    <property type="method" value="X-ray"/>
    <property type="resolution" value="1.90 A"/>
    <property type="chains" value="A/B/C/D=1-185"/>
</dbReference>
<dbReference type="PDBsum" id="2ZCM"/>
<dbReference type="PDBsum" id="2ZCN"/>
<dbReference type="SMR" id="Q5HKQ1"/>
<dbReference type="STRING" id="176279.SERP2292"/>
<dbReference type="KEGG" id="ser:SERP2292"/>
<dbReference type="eggNOG" id="COG1309">
    <property type="taxonomic scope" value="Bacteria"/>
</dbReference>
<dbReference type="HOGENOM" id="CLU_124987_0_0_9"/>
<dbReference type="EvolutionaryTrace" id="Q5HKQ1"/>
<dbReference type="Proteomes" id="UP000000531">
    <property type="component" value="Chromosome"/>
</dbReference>
<dbReference type="GO" id="GO:0003677">
    <property type="term" value="F:DNA binding"/>
    <property type="evidence" value="ECO:0007669"/>
    <property type="project" value="UniProtKB-KW"/>
</dbReference>
<dbReference type="Gene3D" id="1.10.357.10">
    <property type="entry name" value="Tetracycline Repressor, domain 2"/>
    <property type="match status" value="1"/>
</dbReference>
<dbReference type="InterPro" id="IPR009057">
    <property type="entry name" value="Homeodomain-like_sf"/>
</dbReference>
<dbReference type="InterPro" id="IPR050624">
    <property type="entry name" value="HTH-type_Tx_Regulator"/>
</dbReference>
<dbReference type="InterPro" id="IPR001647">
    <property type="entry name" value="HTH_TetR"/>
</dbReference>
<dbReference type="InterPro" id="IPR041646">
    <property type="entry name" value="IcaR_C"/>
</dbReference>
<dbReference type="PANTHER" id="PTHR43479">
    <property type="entry name" value="ACREF/ENVCD OPERON REPRESSOR-RELATED"/>
    <property type="match status" value="1"/>
</dbReference>
<dbReference type="PANTHER" id="PTHR43479:SF11">
    <property type="entry name" value="ACREF_ENVCD OPERON REPRESSOR-RELATED"/>
    <property type="match status" value="1"/>
</dbReference>
<dbReference type="Pfam" id="PF18665">
    <property type="entry name" value="TetR_C_37"/>
    <property type="match status" value="1"/>
</dbReference>
<dbReference type="Pfam" id="PF00440">
    <property type="entry name" value="TetR_N"/>
    <property type="match status" value="1"/>
</dbReference>
<dbReference type="PRINTS" id="PR00455">
    <property type="entry name" value="HTHTETR"/>
</dbReference>
<dbReference type="SUPFAM" id="SSF46689">
    <property type="entry name" value="Homeodomain-like"/>
    <property type="match status" value="1"/>
</dbReference>
<dbReference type="PROSITE" id="PS50977">
    <property type="entry name" value="HTH_TETR_2"/>
    <property type="match status" value="1"/>
</dbReference>
<gene>
    <name type="primary">icaR</name>
    <name type="ordered locus">SERP2292</name>
</gene>
<name>ICAR_STAEQ</name>
<evidence type="ECO:0000255" key="1">
    <source>
        <dbReference type="PROSITE-ProRule" id="PRU00335"/>
    </source>
</evidence>
<evidence type="ECO:0000269" key="2">
    <source>
    </source>
</evidence>
<evidence type="ECO:0000269" key="3">
    <source>
    </source>
</evidence>
<evidence type="ECO:0000305" key="4"/>
<evidence type="ECO:0007829" key="5">
    <source>
        <dbReference type="PDB" id="2ZCM"/>
    </source>
</evidence>
<accession>Q5HKQ1</accession>
<accession>O70020</accession>
<feature type="chain" id="PRO_0000070604" description="Biofilm operon icaADBC HTH-type negative transcriptional regulator IcaR">
    <location>
        <begin position="1"/>
        <end position="185"/>
    </location>
</feature>
<feature type="domain" description="HTH tetR-type" evidence="1">
    <location>
        <begin position="1"/>
        <end position="59"/>
    </location>
</feature>
<feature type="DNA-binding region" description="H-T-H motif" evidence="4">
    <location>
        <begin position="22"/>
        <end position="41"/>
    </location>
</feature>
<feature type="mutagenesis site" description="One-third decrease in DNA-binding affinity." evidence="3">
    <original>L</original>
    <variation>T</variation>
    <location>
        <position position="23"/>
    </location>
</feature>
<feature type="mutagenesis site" description="6-fold increase in DNA-binding affinity." evidence="3">
    <original>L</original>
    <variation>V</variation>
    <location>
        <position position="23"/>
    </location>
</feature>
<feature type="mutagenesis site" description="No DNA-binding and loss of repressor activity." evidence="3">
    <original>K</original>
    <variation>E</variation>
    <location>
        <position position="33"/>
    </location>
</feature>
<feature type="mutagenesis site" description="5-fold decrease in DNA-binding affinity." evidence="3">
    <original>K</original>
    <variation>S</variation>
    <location>
        <position position="33"/>
    </location>
</feature>
<feature type="mutagenesis site" description="2-fold increase in DNA-binding affinity." evidence="3">
    <original>A</original>
    <variation>G</variation>
    <location>
        <position position="35"/>
    </location>
</feature>
<feature type="mutagenesis site" description="5-fold increase in DNA-binding affinity." evidence="3">
    <original>A</original>
    <variation>P</variation>
    <location>
        <position position="35"/>
    </location>
</feature>
<feature type="helix" evidence="5">
    <location>
        <begin position="2"/>
        <end position="16"/>
    </location>
</feature>
<feature type="turn" evidence="5">
    <location>
        <begin position="18"/>
        <end position="20"/>
    </location>
</feature>
<feature type="helix" evidence="5">
    <location>
        <begin position="23"/>
        <end position="29"/>
    </location>
</feature>
<feature type="helix" evidence="5">
    <location>
        <begin position="34"/>
        <end position="40"/>
    </location>
</feature>
<feature type="helix" evidence="5">
    <location>
        <begin position="44"/>
        <end position="62"/>
    </location>
</feature>
<feature type="helix" evidence="5">
    <location>
        <begin position="73"/>
        <end position="86"/>
    </location>
</feature>
<feature type="helix" evidence="5">
    <location>
        <begin position="89"/>
        <end position="96"/>
    </location>
</feature>
<feature type="helix" evidence="5">
    <location>
        <begin position="97"/>
        <end position="100"/>
    </location>
</feature>
<feature type="helix" evidence="5">
    <location>
        <begin position="103"/>
        <end position="105"/>
    </location>
</feature>
<feature type="helix" evidence="5">
    <location>
        <begin position="106"/>
        <end position="127"/>
    </location>
</feature>
<feature type="turn" evidence="5">
    <location>
        <begin position="130"/>
        <end position="132"/>
    </location>
</feature>
<feature type="strand" evidence="5">
    <location>
        <begin position="133"/>
        <end position="135"/>
    </location>
</feature>
<feature type="helix" evidence="5">
    <location>
        <begin position="137"/>
        <end position="161"/>
    </location>
</feature>
<feature type="helix" evidence="5">
    <location>
        <begin position="164"/>
        <end position="166"/>
    </location>
</feature>
<feature type="helix" evidence="5">
    <location>
        <begin position="168"/>
        <end position="182"/>
    </location>
</feature>
<reference key="1">
    <citation type="journal article" date="1996" name="Mol. Microbiol.">
        <title>Molecular basis of intercellular adhesion in the biofilm-forming Staphylococcus epidermidis.</title>
        <authorList>
            <person name="Heilmann C."/>
            <person name="Schweitzer O."/>
            <person name="Gerke C."/>
            <person name="Vanittanakom N."/>
            <person name="Mack D."/>
            <person name="Goetz F."/>
        </authorList>
    </citation>
    <scope>NUCLEOTIDE SEQUENCE [GENOMIC DNA]</scope>
</reference>
<reference key="2">
    <citation type="journal article" date="2005" name="J. Bacteriol.">
        <title>Insights on evolution of virulence and resistance from the complete genome analysis of an early methicillin-resistant Staphylococcus aureus strain and a biofilm-producing methicillin-resistant Staphylococcus epidermidis strain.</title>
        <authorList>
            <person name="Gill S.R."/>
            <person name="Fouts D.E."/>
            <person name="Archer G.L."/>
            <person name="Mongodin E.F."/>
            <person name="DeBoy R.T."/>
            <person name="Ravel J."/>
            <person name="Paulsen I.T."/>
            <person name="Kolonay J.F."/>
            <person name="Brinkac L.M."/>
            <person name="Beanan M.J."/>
            <person name="Dodson R.J."/>
            <person name="Daugherty S.C."/>
            <person name="Madupu R."/>
            <person name="Angiuoli S.V."/>
            <person name="Durkin A.S."/>
            <person name="Haft D.H."/>
            <person name="Vamathevan J.J."/>
            <person name="Khouri H."/>
            <person name="Utterback T.R."/>
            <person name="Lee C."/>
            <person name="Dimitrov G."/>
            <person name="Jiang L."/>
            <person name="Qin H."/>
            <person name="Weidman J."/>
            <person name="Tran K."/>
            <person name="Kang K.H."/>
            <person name="Hance I.R."/>
            <person name="Nelson K.E."/>
            <person name="Fraser C.M."/>
        </authorList>
    </citation>
    <scope>NUCLEOTIDE SEQUENCE [LARGE SCALE GENOMIC DNA]</scope>
    <source>
        <strain>ATCC 35984 / DSM 28319 / BCRC 17069 / CCUG 31568 / BM 3577 / RP62A</strain>
    </source>
</reference>
<reference key="3">
    <citation type="journal article" date="2002" name="J. Bacteriol.">
        <title>icaR encodes a transcriptional repressor involved in environmental regulation of ica operon expression and biofilm formation in Staphylococcus epidermidis.</title>
        <authorList>
            <person name="Conlon K.M."/>
            <person name="Humphreys H."/>
            <person name="O'Gara J.P."/>
        </authorList>
    </citation>
    <scope>FUNCTION</scope>
    <scope>INDUCTION</scope>
    <scope>DISRUPTION PHENOTYPE</scope>
</reference>
<reference key="4">
    <citation type="journal article" date="2008" name="Nucleic Acids Res.">
        <title>Crystal structure of IcaR, a repressor of the TetR family implicated in biofilm formation in Staphylococcus epidermidis.</title>
        <authorList>
            <person name="Jeng W.Y."/>
            <person name="Ko T.P."/>
            <person name="Liu C.I."/>
            <person name="Guo R.T."/>
            <person name="Liu C.L."/>
            <person name="Shr H.L."/>
            <person name="Wang A.H."/>
        </authorList>
    </citation>
    <scope>X-RAY CRYSTALLOGRAPHY (1.33 ANGSTROMS)</scope>
    <scope>DNA-BINDING</scope>
    <scope>SUBUNIT</scope>
    <scope>MUTAGENESIS OF LEU-23; LYS-33 AND ALA-35</scope>
    <scope>EFFECTS OF ANTIBIOTICS</scope>
</reference>
<proteinExistence type="evidence at protein level"/>
<protein>
    <recommendedName>
        <fullName>Biofilm operon icaADBC HTH-type negative transcriptional regulator IcaR</fullName>
    </recommendedName>
    <alternativeName>
        <fullName>Intercellular adhesion protein R</fullName>
    </alternativeName>
</protein>
<sequence length="185" mass="22169">MKDKIIDNAITLFSEKGYDGTTLDDISKSVNIKKASLYYHYDNKEEIYRKSVENCFNYFIDFLLRNHDDNYSIDGLYQFLFKFIFDVDERYIKLYVQLSSAPEALNSEIKHHLQEINTTLHDELIKYYDPTHIALDKEDFINLILLFLETWYFRASFSQKFGIIEDSKNRFKDQVYSLLNVFLKK</sequence>
<organism>
    <name type="scientific">Staphylococcus epidermidis (strain ATCC 35984 / DSM 28319 / BCRC 17069 / CCUG 31568 / BM 3577 / RP62A)</name>
    <dbReference type="NCBI Taxonomy" id="176279"/>
    <lineage>
        <taxon>Bacteria</taxon>
        <taxon>Bacillati</taxon>
        <taxon>Bacillota</taxon>
        <taxon>Bacilli</taxon>
        <taxon>Bacillales</taxon>
        <taxon>Staphylococcaceae</taxon>
        <taxon>Staphylococcus</taxon>
    </lineage>
</organism>